<feature type="chain" id="PRO_0000114333" description="Polycomb protein Scm">
    <location>
        <begin position="1"/>
        <end position="877"/>
    </location>
</feature>
<feature type="repeat" description="MBT 1" evidence="2">
    <location>
        <begin position="175"/>
        <end position="273"/>
    </location>
</feature>
<feature type="repeat" description="MBT 2" evidence="2">
    <location>
        <begin position="281"/>
        <end position="382"/>
    </location>
</feature>
<feature type="domain" description="SAM" evidence="3">
    <location>
        <begin position="806"/>
        <end position="876"/>
    </location>
</feature>
<feature type="zinc finger region" description="FCS-type" evidence="4">
    <location>
        <begin position="54"/>
        <end position="93"/>
    </location>
</feature>
<feature type="region of interest" description="Disordered" evidence="5">
    <location>
        <begin position="1"/>
        <end position="57"/>
    </location>
</feature>
<feature type="region of interest" description="Disordered" evidence="5">
    <location>
        <begin position="535"/>
        <end position="621"/>
    </location>
</feature>
<feature type="region of interest" description="Disordered" evidence="5">
    <location>
        <begin position="652"/>
        <end position="692"/>
    </location>
</feature>
<feature type="region of interest" description="Disordered" evidence="5">
    <location>
        <begin position="713"/>
        <end position="735"/>
    </location>
</feature>
<feature type="compositionally biased region" description="Low complexity" evidence="5">
    <location>
        <begin position="7"/>
        <end position="50"/>
    </location>
</feature>
<feature type="compositionally biased region" description="Polar residues" evidence="5">
    <location>
        <begin position="560"/>
        <end position="569"/>
    </location>
</feature>
<feature type="compositionally biased region" description="Low complexity" evidence="5">
    <location>
        <begin position="598"/>
        <end position="620"/>
    </location>
</feature>
<feature type="compositionally biased region" description="Low complexity" evidence="5">
    <location>
        <begin position="724"/>
        <end position="735"/>
    </location>
</feature>
<feature type="binding site" evidence="4">
    <location>
        <position position="63"/>
    </location>
    <ligand>
        <name>Zn(2+)</name>
        <dbReference type="ChEBI" id="CHEBI:29105"/>
    </ligand>
</feature>
<feature type="binding site" evidence="4">
    <location>
        <position position="66"/>
    </location>
    <ligand>
        <name>Zn(2+)</name>
        <dbReference type="ChEBI" id="CHEBI:29105"/>
    </ligand>
</feature>
<feature type="binding site" evidence="4">
    <location>
        <position position="87"/>
    </location>
    <ligand>
        <name>Zn(2+)</name>
        <dbReference type="ChEBI" id="CHEBI:29105"/>
    </ligand>
</feature>
<feature type="binding site" evidence="4">
    <location>
        <position position="91"/>
    </location>
    <ligand>
        <name>Zn(2+)</name>
        <dbReference type="ChEBI" id="CHEBI:29105"/>
    </ligand>
</feature>
<feature type="modified residue" description="Phosphothreonine" evidence="11">
    <location>
        <position position="546"/>
    </location>
</feature>
<feature type="modified residue" description="Phosphoserine" evidence="11">
    <location>
        <position position="549"/>
    </location>
</feature>
<feature type="modified residue" description="Phosphoserine" evidence="11">
    <location>
        <position position="550"/>
    </location>
</feature>
<feature type="modified residue" description="Phosphoserine" evidence="11">
    <location>
        <position position="585"/>
    </location>
</feature>
<feature type="mutagenesis site" description="No effect on function. Shows self- and ph-p binding activity comparable to wild-type; when associated with V-846 and R-860." evidence="9">
    <original>E</original>
    <variation>G</variation>
    <location>
        <position position="816"/>
    </location>
</feature>
<feature type="mutagenesis site" description="Complete loss of function. Significant loss of self-binding activity. Moderate loss of ph-p binding activity." evidence="13">
    <original>I</original>
    <variation>T</variation>
    <location>
        <position position="834"/>
    </location>
</feature>
<feature type="mutagenesis site" description="Complete loss of function. Complete loss of self- and ph-p binding activity." evidence="9 13">
    <original>G</original>
    <variation>D</variation>
    <location>
        <position position="836"/>
    </location>
</feature>
<feature type="mutagenesis site" description="Loss of self- and ph-p binding activity." evidence="9 13">
    <original>G</original>
    <variation>S</variation>
    <location>
        <position position="836"/>
    </location>
</feature>
<feature type="mutagenesis site" description="Several-fold reduction of self-binding activity. Partial loss of ph-p binding activity." evidence="13">
    <original>LL</original>
    <variation>SS</variation>
    <location>
        <begin position="840"/>
        <end position="841"/>
    </location>
</feature>
<feature type="mutagenesis site" description="No effect on function. Shows self- and ph-p binding activity comparable to wild-type; when associated with G-816 and R-860." evidence="9">
    <original>M</original>
    <variation>V</variation>
    <location>
        <position position="846"/>
    </location>
</feature>
<feature type="mutagenesis site" description="Complete loss of function. Significant loss of self-binding activity. Partial loss of ph-p binding activity." evidence="9">
    <location>
        <position position="848"/>
    </location>
</feature>
<feature type="mutagenesis site" description="Complete loss of function. Complete loss of self- and ph-p binding activity." evidence="9">
    <original>M</original>
    <variation>R</variation>
    <location>
        <position position="851"/>
    </location>
</feature>
<feature type="mutagenesis site" description="Partial loss of self- and ph-p binding activity." evidence="13">
    <original>K</original>
    <variation>A</variation>
    <location>
        <position position="854"/>
    </location>
</feature>
<feature type="mutagenesis site" description="Complete loss of function. Partial loss of self-binding activity. Complete loss of ph-p binding activity." evidence="9">
    <original>K</original>
    <variation>E</variation>
    <location>
        <position position="860"/>
    </location>
</feature>
<feature type="mutagenesis site" description="No effect on function. Shows self- and ph-p binding activity comparable to wild-type; when associated with G-816 and V-846." evidence="9">
    <original>K</original>
    <variation>R</variation>
    <location>
        <position position="860"/>
    </location>
</feature>
<feature type="helix" evidence="20">
    <location>
        <begin position="177"/>
        <end position="183"/>
    </location>
</feature>
<feature type="helix" evidence="20">
    <location>
        <begin position="191"/>
        <end position="193"/>
    </location>
</feature>
<feature type="strand" evidence="20">
    <location>
        <begin position="194"/>
        <end position="196"/>
    </location>
</feature>
<feature type="strand" evidence="20">
    <location>
        <begin position="210"/>
        <end position="215"/>
    </location>
</feature>
<feature type="strand" evidence="20">
    <location>
        <begin position="218"/>
        <end position="231"/>
    </location>
</feature>
<feature type="strand" evidence="20">
    <location>
        <begin position="234"/>
        <end position="239"/>
    </location>
</feature>
<feature type="strand" evidence="20">
    <location>
        <begin position="248"/>
        <end position="251"/>
    </location>
</feature>
<feature type="helix" evidence="20">
    <location>
        <begin position="262"/>
        <end position="265"/>
    </location>
</feature>
<feature type="helix" evidence="20">
    <location>
        <begin position="280"/>
        <end position="282"/>
    </location>
</feature>
<feature type="helix" evidence="20">
    <location>
        <begin position="283"/>
        <end position="291"/>
    </location>
</feature>
<feature type="helix" evidence="20">
    <location>
        <begin position="299"/>
        <end position="301"/>
    </location>
</feature>
<feature type="strand" evidence="20">
    <location>
        <begin position="319"/>
        <end position="323"/>
    </location>
</feature>
<feature type="strand" evidence="20">
    <location>
        <begin position="331"/>
        <end position="340"/>
    </location>
</feature>
<feature type="strand" evidence="20">
    <location>
        <begin position="343"/>
        <end position="348"/>
    </location>
</feature>
<feature type="helix" evidence="20">
    <location>
        <begin position="353"/>
        <end position="355"/>
    </location>
</feature>
<feature type="strand" evidence="20">
    <location>
        <begin position="357"/>
        <end position="360"/>
    </location>
</feature>
<feature type="helix" evidence="20">
    <location>
        <begin position="371"/>
        <end position="375"/>
    </location>
</feature>
<feature type="helix" evidence="19">
    <location>
        <begin position="797"/>
        <end position="800"/>
    </location>
</feature>
<feature type="helix" evidence="18">
    <location>
        <begin position="803"/>
        <end position="805"/>
    </location>
</feature>
<feature type="helix" evidence="18">
    <location>
        <begin position="808"/>
        <end position="818"/>
    </location>
</feature>
<feature type="helix" evidence="18">
    <location>
        <begin position="820"/>
        <end position="825"/>
    </location>
</feature>
<feature type="helix" evidence="18">
    <location>
        <begin position="826"/>
        <end position="831"/>
    </location>
</feature>
<feature type="helix" evidence="18">
    <location>
        <begin position="836"/>
        <end position="840"/>
    </location>
</feature>
<feature type="helix" evidence="18">
    <location>
        <begin position="844"/>
        <end position="850"/>
    </location>
</feature>
<feature type="helix" evidence="18">
    <location>
        <begin position="855"/>
        <end position="868"/>
    </location>
</feature>
<proteinExistence type="evidence at protein level"/>
<evidence type="ECO:0000250" key="1">
    <source>
        <dbReference type="UniProtKB" id="Q9W3C1"/>
    </source>
</evidence>
<evidence type="ECO:0000255" key="2"/>
<evidence type="ECO:0000255" key="3">
    <source>
        <dbReference type="PROSITE-ProRule" id="PRU00184"/>
    </source>
</evidence>
<evidence type="ECO:0000255" key="4">
    <source>
        <dbReference type="PROSITE-ProRule" id="PRU00367"/>
    </source>
</evidence>
<evidence type="ECO:0000256" key="5">
    <source>
        <dbReference type="SAM" id="MobiDB-lite"/>
    </source>
</evidence>
<evidence type="ECO:0000269" key="6">
    <source>
    </source>
</evidence>
<evidence type="ECO:0000269" key="7">
    <source>
    </source>
</evidence>
<evidence type="ECO:0000269" key="8">
    <source>
    </source>
</evidence>
<evidence type="ECO:0000269" key="9">
    <source>
    </source>
</evidence>
<evidence type="ECO:0000269" key="10">
    <source>
    </source>
</evidence>
<evidence type="ECO:0000269" key="11">
    <source>
    </source>
</evidence>
<evidence type="ECO:0000269" key="12">
    <source>
    </source>
</evidence>
<evidence type="ECO:0000269" key="13">
    <source>
    </source>
</evidence>
<evidence type="ECO:0000305" key="14"/>
<evidence type="ECO:0000312" key="15">
    <source>
        <dbReference type="EMBL" id="AAB57632.1"/>
    </source>
</evidence>
<evidence type="ECO:0000312" key="16">
    <source>
        <dbReference type="EMBL" id="AAF54419.2"/>
    </source>
</evidence>
<evidence type="ECO:0000312" key="17">
    <source>
        <dbReference type="EMBL" id="AAN71320.1"/>
    </source>
</evidence>
<evidence type="ECO:0007829" key="18">
    <source>
        <dbReference type="PDB" id="1PK1"/>
    </source>
</evidence>
<evidence type="ECO:0007829" key="19">
    <source>
        <dbReference type="PDB" id="1PK3"/>
    </source>
</evidence>
<evidence type="ECO:0007829" key="20">
    <source>
        <dbReference type="PDB" id="2R58"/>
    </source>
</evidence>
<keyword id="KW-0002">3D-structure</keyword>
<keyword id="KW-0156">Chromatin regulator</keyword>
<keyword id="KW-0217">Developmental protein</keyword>
<keyword id="KW-0479">Metal-binding</keyword>
<keyword id="KW-0539">Nucleus</keyword>
<keyword id="KW-0597">Phosphoprotein</keyword>
<keyword id="KW-1185">Reference proteome</keyword>
<keyword id="KW-0677">Repeat</keyword>
<keyword id="KW-0678">Repressor</keyword>
<keyword id="KW-0804">Transcription</keyword>
<keyword id="KW-0805">Transcription regulation</keyword>
<keyword id="KW-0862">Zinc</keyword>
<keyword id="KW-0863">Zinc-finger</keyword>
<organism>
    <name type="scientific">Drosophila melanogaster</name>
    <name type="common">Fruit fly</name>
    <dbReference type="NCBI Taxonomy" id="7227"/>
    <lineage>
        <taxon>Eukaryota</taxon>
        <taxon>Metazoa</taxon>
        <taxon>Ecdysozoa</taxon>
        <taxon>Arthropoda</taxon>
        <taxon>Hexapoda</taxon>
        <taxon>Insecta</taxon>
        <taxon>Pterygota</taxon>
        <taxon>Neoptera</taxon>
        <taxon>Endopterygota</taxon>
        <taxon>Diptera</taxon>
        <taxon>Brachycera</taxon>
        <taxon>Muscomorpha</taxon>
        <taxon>Ephydroidea</taxon>
        <taxon>Drosophilidae</taxon>
        <taxon>Drosophila</taxon>
        <taxon>Sophophora</taxon>
    </lineage>
</organism>
<gene>
    <name evidence="16" type="primary">Scm</name>
    <name type="ORF">CG9495</name>
</gene>
<protein>
    <recommendedName>
        <fullName>Polycomb protein Scm</fullName>
    </recommendedName>
    <alternativeName>
        <fullName>Sex comb on midleg protein</fullName>
    </alternativeName>
</protein>
<name>SCM_DROME</name>
<comment type="function">
    <text evidence="1 9">Polycomb group (PcG) protein. PcG proteins act by forming multiprotein complexes, which are required to maintain the transcriptionally repressive state of homeotic genes throughout development. PcG proteins are not required to initiate repression, but to maintain it during later stages of development. They probably act via the methylation of histones, rendering chromatin heritably changed in its expressibility.</text>
</comment>
<comment type="subunit">
    <text evidence="8 9 10 13">Scm associates with the PRC1 core complex containing PSC, PC, PH and Sce/RING1. Forms homotypic and heterotypic interactions. Interacts with the SAM domain of ph-p via its SAM domain in vitro. Interacts with corto in vitro.</text>
</comment>
<comment type="interaction">
    <interactant intactId="EBI-89256">
        <id>Q9VHA0</id>
    </interactant>
    <interactant intactId="EBI-300379">
        <id>P41046</id>
        <label>corto</label>
    </interactant>
    <organismsDiffer>false</organismsDiffer>
    <experiments>2</experiments>
</comment>
<comment type="interaction">
    <interactant intactId="EBI-89256">
        <id>Q9VHA0</id>
    </interactant>
    <interactant intactId="EBI-522090">
        <id>P02299</id>
        <label>His3:CG33854</label>
    </interactant>
    <organismsDiffer>false</organismsDiffer>
    <experiments>4</experiments>
</comment>
<comment type="interaction">
    <interactant intactId="EBI-89256">
        <id>Q9VHA0</id>
    </interactant>
    <interactant intactId="EBI-300360">
        <id>P39769</id>
        <label>ph-p</label>
    </interactant>
    <organismsDiffer>false</organismsDiffer>
    <experiments>6</experiments>
</comment>
<comment type="interaction">
    <interactant intactId="EBI-89256">
        <id>Q9VHA0</id>
    </interactant>
    <interactant intactId="EBI-89256">
        <id>Q9VHA0</id>
        <label>Scm</label>
    </interactant>
    <organismsDiffer>false</organismsDiffer>
    <experiments>4</experiments>
</comment>
<comment type="subcellular location">
    <subcellularLocation>
        <location evidence="14">Nucleus</location>
    </subcellularLocation>
</comment>
<comment type="developmental stage">
    <text evidence="12">Expressed both maternally and zygotically. Levels are highest in 0-2 hours embryos and at lower levels during later embryonic and larval stages. A modest increase in expression is seen during the pupal stage. Expressed throughout the 9 hours embryo. After 12 hours expression is concentrated in the central nervous system.</text>
</comment>
<comment type="domain">
    <text evidence="9">The SAM domain is essential for function.</text>
</comment>
<comment type="similarity">
    <text evidence="2">Belongs to the SCM family.</text>
</comment>
<dbReference type="EMBL" id="U49793">
    <property type="protein sequence ID" value="AAB57632.1"/>
    <property type="molecule type" value="mRNA"/>
</dbReference>
<dbReference type="EMBL" id="AE014297">
    <property type="protein sequence ID" value="AAF54419.2"/>
    <property type="molecule type" value="Genomic_DNA"/>
</dbReference>
<dbReference type="EMBL" id="BT001565">
    <property type="protein sequence ID" value="AAN71320.1"/>
    <property type="molecule type" value="mRNA"/>
</dbReference>
<dbReference type="RefSeq" id="NP_001247006.1">
    <property type="nucleotide sequence ID" value="NM_001260077.2"/>
</dbReference>
<dbReference type="RefSeq" id="NP_731385.1">
    <property type="nucleotide sequence ID" value="NM_169299.2"/>
</dbReference>
<dbReference type="PDB" id="1PK1">
    <property type="method" value="X-ray"/>
    <property type="resolution" value="1.80 A"/>
    <property type="chains" value="B/D=795-871"/>
</dbReference>
<dbReference type="PDB" id="1PK3">
    <property type="method" value="X-ray"/>
    <property type="resolution" value="1.85 A"/>
    <property type="chains" value="A/B/C=795-871"/>
</dbReference>
<dbReference type="PDB" id="2R57">
    <property type="method" value="X-ray"/>
    <property type="resolution" value="2.20 A"/>
    <property type="chains" value="A=175-435"/>
</dbReference>
<dbReference type="PDB" id="2R58">
    <property type="method" value="X-ray"/>
    <property type="resolution" value="2.00 A"/>
    <property type="chains" value="A=175-435"/>
</dbReference>
<dbReference type="PDB" id="2R5A">
    <property type="method" value="X-ray"/>
    <property type="resolution" value="2.30 A"/>
    <property type="chains" value="A=175-435"/>
</dbReference>
<dbReference type="PDB" id="2R5M">
    <property type="method" value="X-ray"/>
    <property type="resolution" value="2.65 A"/>
    <property type="chains" value="A=175-435"/>
</dbReference>
<dbReference type="PDB" id="5J8Y">
    <property type="method" value="X-ray"/>
    <property type="resolution" value="1.98 A"/>
    <property type="chains" value="A/B=803-877"/>
</dbReference>
<dbReference type="PDBsum" id="1PK1"/>
<dbReference type="PDBsum" id="1PK3"/>
<dbReference type="PDBsum" id="2R57"/>
<dbReference type="PDBsum" id="2R58"/>
<dbReference type="PDBsum" id="2R5A"/>
<dbReference type="PDBsum" id="2R5M"/>
<dbReference type="PDBsum" id="5J8Y"/>
<dbReference type="SMR" id="Q9VHA0"/>
<dbReference type="BioGRID" id="66327">
    <property type="interactions" value="57"/>
</dbReference>
<dbReference type="DIP" id="DIP-17570N"/>
<dbReference type="FunCoup" id="Q9VHA0">
    <property type="interactions" value="1075"/>
</dbReference>
<dbReference type="IntAct" id="Q9VHA0">
    <property type="interactions" value="23"/>
</dbReference>
<dbReference type="MINT" id="Q9VHA0"/>
<dbReference type="STRING" id="7227.FBpp0081580"/>
<dbReference type="GlyGen" id="Q9VHA0">
    <property type="glycosylation" value="1 site"/>
</dbReference>
<dbReference type="iPTMnet" id="Q9VHA0"/>
<dbReference type="PaxDb" id="7227-FBpp0081580"/>
<dbReference type="EnsemblMetazoa" id="FBtr0082102">
    <property type="protein sequence ID" value="FBpp0081580"/>
    <property type="gene ID" value="FBgn0003334"/>
</dbReference>
<dbReference type="EnsemblMetazoa" id="FBtr0306008">
    <property type="protein sequence ID" value="FBpp0297150"/>
    <property type="gene ID" value="FBgn0003334"/>
</dbReference>
<dbReference type="GeneID" id="41168"/>
<dbReference type="KEGG" id="dme:Dmel_CG9495"/>
<dbReference type="AGR" id="FB:FBgn0003334"/>
<dbReference type="CTD" id="41168"/>
<dbReference type="FlyBase" id="FBgn0003334">
    <property type="gene designation" value="Scm"/>
</dbReference>
<dbReference type="VEuPathDB" id="VectorBase:FBgn0003334"/>
<dbReference type="eggNOG" id="KOG3766">
    <property type="taxonomic scope" value="Eukaryota"/>
</dbReference>
<dbReference type="GeneTree" id="ENSGT00940000175826"/>
<dbReference type="HOGENOM" id="CLU_015000_0_0_1"/>
<dbReference type="InParanoid" id="Q9VHA0"/>
<dbReference type="OMA" id="NKEFCSM"/>
<dbReference type="OrthoDB" id="5912862at2759"/>
<dbReference type="PhylomeDB" id="Q9VHA0"/>
<dbReference type="Reactome" id="R-DME-2559580">
    <property type="pathway name" value="Oxidative Stress Induced Senescence"/>
</dbReference>
<dbReference type="Reactome" id="R-DME-3108214">
    <property type="pathway name" value="SUMOylation of DNA damage response and repair proteins"/>
</dbReference>
<dbReference type="Reactome" id="R-DME-3899300">
    <property type="pathway name" value="SUMOylation of transcription cofactors"/>
</dbReference>
<dbReference type="Reactome" id="R-DME-4570464">
    <property type="pathway name" value="SUMOylation of RNA binding proteins"/>
</dbReference>
<dbReference type="Reactome" id="R-DME-8939243">
    <property type="pathway name" value="RUNX1 interacts with co-factors whose precise effect on RUNX1 targets is not known"/>
</dbReference>
<dbReference type="Reactome" id="R-DME-8943724">
    <property type="pathway name" value="Regulation of PTEN gene transcription"/>
</dbReference>
<dbReference type="SignaLink" id="Q9VHA0"/>
<dbReference type="BioGRID-ORCS" id="41168">
    <property type="hits" value="0 hits in 3 CRISPR screens"/>
</dbReference>
<dbReference type="EvolutionaryTrace" id="Q9VHA0"/>
<dbReference type="GenomeRNAi" id="41168"/>
<dbReference type="PRO" id="PR:Q9VHA0"/>
<dbReference type="Proteomes" id="UP000000803">
    <property type="component" value="Chromosome 3R"/>
</dbReference>
<dbReference type="Bgee" id="FBgn0003334">
    <property type="expression patterns" value="Expressed in cleaving embryo and 130 other cell types or tissues"/>
</dbReference>
<dbReference type="ExpressionAtlas" id="Q9VHA0">
    <property type="expression patterns" value="baseline and differential"/>
</dbReference>
<dbReference type="GO" id="GO:0005634">
    <property type="term" value="C:nucleus"/>
    <property type="evidence" value="ECO:0000314"/>
    <property type="project" value="FlyBase"/>
</dbReference>
<dbReference type="GO" id="GO:0005700">
    <property type="term" value="C:polytene chromosome"/>
    <property type="evidence" value="ECO:0000314"/>
    <property type="project" value="FlyBase"/>
</dbReference>
<dbReference type="GO" id="GO:0003682">
    <property type="term" value="F:chromatin binding"/>
    <property type="evidence" value="ECO:0000318"/>
    <property type="project" value="GO_Central"/>
</dbReference>
<dbReference type="GO" id="GO:0042393">
    <property type="term" value="F:histone binding"/>
    <property type="evidence" value="ECO:0000318"/>
    <property type="project" value="GO_Central"/>
</dbReference>
<dbReference type="GO" id="GO:0042802">
    <property type="term" value="F:identical protein binding"/>
    <property type="evidence" value="ECO:0000353"/>
    <property type="project" value="UniProtKB"/>
</dbReference>
<dbReference type="GO" id="GO:0140259">
    <property type="term" value="F:PRC1 complex binding"/>
    <property type="evidence" value="ECO:0000314"/>
    <property type="project" value="UniProtKB"/>
</dbReference>
<dbReference type="GO" id="GO:0043565">
    <property type="term" value="F:sequence-specific DNA binding"/>
    <property type="evidence" value="ECO:0000314"/>
    <property type="project" value="FlyBase"/>
</dbReference>
<dbReference type="GO" id="GO:0008270">
    <property type="term" value="F:zinc ion binding"/>
    <property type="evidence" value="ECO:0000303"/>
    <property type="project" value="UniProtKB"/>
</dbReference>
<dbReference type="GO" id="GO:0009948">
    <property type="term" value="P:anterior/posterior axis specification"/>
    <property type="evidence" value="ECO:0000315"/>
    <property type="project" value="UniProtKB"/>
</dbReference>
<dbReference type="GO" id="GO:0007409">
    <property type="term" value="P:axonogenesis"/>
    <property type="evidence" value="ECO:0000315"/>
    <property type="project" value="FlyBase"/>
</dbReference>
<dbReference type="GO" id="GO:0048749">
    <property type="term" value="P:compound eye development"/>
    <property type="evidence" value="ECO:0000315"/>
    <property type="project" value="FlyBase"/>
</dbReference>
<dbReference type="GO" id="GO:0030713">
    <property type="term" value="P:follicle cell of egg chamber stalk formation"/>
    <property type="evidence" value="ECO:0000315"/>
    <property type="project" value="FlyBase"/>
</dbReference>
<dbReference type="GO" id="GO:0030708">
    <property type="term" value="P:germarium-derived female germ-line cyst encapsulation"/>
    <property type="evidence" value="ECO:0000315"/>
    <property type="project" value="FlyBase"/>
</dbReference>
<dbReference type="GO" id="GO:0031507">
    <property type="term" value="P:heterochromatin formation"/>
    <property type="evidence" value="ECO:0000315"/>
    <property type="project" value="FlyBase"/>
</dbReference>
<dbReference type="GO" id="GO:0045892">
    <property type="term" value="P:negative regulation of DNA-templated transcription"/>
    <property type="evidence" value="ECO:0000314"/>
    <property type="project" value="FlyBase"/>
</dbReference>
<dbReference type="GO" id="GO:0045926">
    <property type="term" value="P:negative regulation of growth"/>
    <property type="evidence" value="ECO:0000315"/>
    <property type="project" value="FlyBase"/>
</dbReference>
<dbReference type="GO" id="GO:0022008">
    <property type="term" value="P:neurogenesis"/>
    <property type="evidence" value="ECO:0000315"/>
    <property type="project" value="FlyBase"/>
</dbReference>
<dbReference type="GO" id="GO:0006357">
    <property type="term" value="P:regulation of transcription by RNA polymerase II"/>
    <property type="evidence" value="ECO:0000315"/>
    <property type="project" value="UniProtKB"/>
</dbReference>
<dbReference type="GO" id="GO:0007419">
    <property type="term" value="P:ventral cord development"/>
    <property type="evidence" value="ECO:0007001"/>
    <property type="project" value="FlyBase"/>
</dbReference>
<dbReference type="CDD" id="cd20107">
    <property type="entry name" value="MBT_dScm_rpt1"/>
    <property type="match status" value="1"/>
</dbReference>
<dbReference type="CDD" id="cd20110">
    <property type="entry name" value="MBT_dScm_rpt2"/>
    <property type="match status" value="1"/>
</dbReference>
<dbReference type="CDD" id="cd09578">
    <property type="entry name" value="SAM_Scm"/>
    <property type="match status" value="1"/>
</dbReference>
<dbReference type="FunFam" id="1.10.150.50:FF:000100">
    <property type="entry name" value="Polycomb protein Scm"/>
    <property type="match status" value="1"/>
</dbReference>
<dbReference type="FunFam" id="3.90.1150.190:FF:000004">
    <property type="entry name" value="Polycomb protein Scm"/>
    <property type="match status" value="1"/>
</dbReference>
<dbReference type="FunFam" id="2.30.30.140:FF:000016">
    <property type="entry name" value="polycomb protein SCMH1 isoform X1"/>
    <property type="match status" value="1"/>
</dbReference>
<dbReference type="Gene3D" id="2.30.30.140">
    <property type="match status" value="2"/>
</dbReference>
<dbReference type="Gene3D" id="3.90.1150.190">
    <property type="entry name" value="SLED domain"/>
    <property type="match status" value="1"/>
</dbReference>
<dbReference type="Gene3D" id="1.10.150.50">
    <property type="entry name" value="Transcription Factor, Ets-1"/>
    <property type="match status" value="1"/>
</dbReference>
<dbReference type="InterPro" id="IPR004092">
    <property type="entry name" value="Mbt"/>
</dbReference>
<dbReference type="InterPro" id="IPR050548">
    <property type="entry name" value="PcG_chromatin_remod_factors"/>
</dbReference>
<dbReference type="InterPro" id="IPR001660">
    <property type="entry name" value="SAM"/>
</dbReference>
<dbReference type="InterPro" id="IPR013761">
    <property type="entry name" value="SAM/pointed_sf"/>
</dbReference>
<dbReference type="InterPro" id="IPR047531">
    <property type="entry name" value="SAM_Scm-like"/>
</dbReference>
<dbReference type="InterPro" id="IPR021987">
    <property type="entry name" value="SLED"/>
</dbReference>
<dbReference type="InterPro" id="IPR038348">
    <property type="entry name" value="SLED_sf"/>
</dbReference>
<dbReference type="InterPro" id="IPR012313">
    <property type="entry name" value="Znf_FCS"/>
</dbReference>
<dbReference type="InterPro" id="IPR010507">
    <property type="entry name" value="Znf_MYM"/>
</dbReference>
<dbReference type="PANTHER" id="PTHR12247">
    <property type="entry name" value="POLYCOMB GROUP PROTEIN"/>
    <property type="match status" value="1"/>
</dbReference>
<dbReference type="PANTHER" id="PTHR12247:SF132">
    <property type="entry name" value="POLYCOMB PROTEIN SCM"/>
    <property type="match status" value="1"/>
</dbReference>
<dbReference type="Pfam" id="PF02820">
    <property type="entry name" value="MBT"/>
    <property type="match status" value="2"/>
</dbReference>
<dbReference type="Pfam" id="PF00536">
    <property type="entry name" value="SAM_1"/>
    <property type="match status" value="1"/>
</dbReference>
<dbReference type="Pfam" id="PF12140">
    <property type="entry name" value="SLED"/>
    <property type="match status" value="1"/>
</dbReference>
<dbReference type="Pfam" id="PF06467">
    <property type="entry name" value="zf-FCS"/>
    <property type="match status" value="1"/>
</dbReference>
<dbReference type="SMART" id="SM00561">
    <property type="entry name" value="MBT"/>
    <property type="match status" value="2"/>
</dbReference>
<dbReference type="SMART" id="SM00454">
    <property type="entry name" value="SAM"/>
    <property type="match status" value="1"/>
</dbReference>
<dbReference type="SUPFAM" id="SSF47769">
    <property type="entry name" value="SAM/Pointed domain"/>
    <property type="match status" value="1"/>
</dbReference>
<dbReference type="SUPFAM" id="SSF63748">
    <property type="entry name" value="Tudor/PWWP/MBT"/>
    <property type="match status" value="2"/>
</dbReference>
<dbReference type="PROSITE" id="PS51079">
    <property type="entry name" value="MBT"/>
    <property type="match status" value="2"/>
</dbReference>
<dbReference type="PROSITE" id="PS50105">
    <property type="entry name" value="SAM_DOMAIN"/>
    <property type="match status" value="1"/>
</dbReference>
<dbReference type="PROSITE" id="PS51024">
    <property type="entry name" value="ZF_FCS"/>
    <property type="match status" value="1"/>
</dbReference>
<reference evidence="14 15" key="1">
    <citation type="journal article" date="1996" name="Development">
        <title>The Drosophila polycomb group gene Sex comb on midleg (Scm) encodes a zinc finger protein with similarity to polyhomeotic protein.</title>
        <authorList>
            <person name="Bornemann D."/>
            <person name="Miller E."/>
            <person name="Simon J.A."/>
        </authorList>
    </citation>
    <scope>NUCLEOTIDE SEQUENCE [MRNA]</scope>
    <scope>DEVELOPMENTAL STAGE</scope>
    <source>
        <tissue evidence="12">Embryo</tissue>
    </source>
</reference>
<reference evidence="16" key="2">
    <citation type="journal article" date="2000" name="Science">
        <title>The genome sequence of Drosophila melanogaster.</title>
        <authorList>
            <person name="Adams M.D."/>
            <person name="Celniker S.E."/>
            <person name="Holt R.A."/>
            <person name="Evans C.A."/>
            <person name="Gocayne J.D."/>
            <person name="Amanatides P.G."/>
            <person name="Scherer S.E."/>
            <person name="Li P.W."/>
            <person name="Hoskins R.A."/>
            <person name="Galle R.F."/>
            <person name="George R.A."/>
            <person name="Lewis S.E."/>
            <person name="Richards S."/>
            <person name="Ashburner M."/>
            <person name="Henderson S.N."/>
            <person name="Sutton G.G."/>
            <person name="Wortman J.R."/>
            <person name="Yandell M.D."/>
            <person name="Zhang Q."/>
            <person name="Chen L.X."/>
            <person name="Brandon R.C."/>
            <person name="Rogers Y.-H.C."/>
            <person name="Blazej R.G."/>
            <person name="Champe M."/>
            <person name="Pfeiffer B.D."/>
            <person name="Wan K.H."/>
            <person name="Doyle C."/>
            <person name="Baxter E.G."/>
            <person name="Helt G."/>
            <person name="Nelson C.R."/>
            <person name="Miklos G.L.G."/>
            <person name="Abril J.F."/>
            <person name="Agbayani A."/>
            <person name="An H.-J."/>
            <person name="Andrews-Pfannkoch C."/>
            <person name="Baldwin D."/>
            <person name="Ballew R.M."/>
            <person name="Basu A."/>
            <person name="Baxendale J."/>
            <person name="Bayraktaroglu L."/>
            <person name="Beasley E.M."/>
            <person name="Beeson K.Y."/>
            <person name="Benos P.V."/>
            <person name="Berman B.P."/>
            <person name="Bhandari D."/>
            <person name="Bolshakov S."/>
            <person name="Borkova D."/>
            <person name="Botchan M.R."/>
            <person name="Bouck J."/>
            <person name="Brokstein P."/>
            <person name="Brottier P."/>
            <person name="Burtis K.C."/>
            <person name="Busam D.A."/>
            <person name="Butler H."/>
            <person name="Cadieu E."/>
            <person name="Center A."/>
            <person name="Chandra I."/>
            <person name="Cherry J.M."/>
            <person name="Cawley S."/>
            <person name="Dahlke C."/>
            <person name="Davenport L.B."/>
            <person name="Davies P."/>
            <person name="de Pablos B."/>
            <person name="Delcher A."/>
            <person name="Deng Z."/>
            <person name="Mays A.D."/>
            <person name="Dew I."/>
            <person name="Dietz S.M."/>
            <person name="Dodson K."/>
            <person name="Doup L.E."/>
            <person name="Downes M."/>
            <person name="Dugan-Rocha S."/>
            <person name="Dunkov B.C."/>
            <person name="Dunn P."/>
            <person name="Durbin K.J."/>
            <person name="Evangelista C.C."/>
            <person name="Ferraz C."/>
            <person name="Ferriera S."/>
            <person name="Fleischmann W."/>
            <person name="Fosler C."/>
            <person name="Gabrielian A.E."/>
            <person name="Garg N.S."/>
            <person name="Gelbart W.M."/>
            <person name="Glasser K."/>
            <person name="Glodek A."/>
            <person name="Gong F."/>
            <person name="Gorrell J.H."/>
            <person name="Gu Z."/>
            <person name="Guan P."/>
            <person name="Harris M."/>
            <person name="Harris N.L."/>
            <person name="Harvey D.A."/>
            <person name="Heiman T.J."/>
            <person name="Hernandez J.R."/>
            <person name="Houck J."/>
            <person name="Hostin D."/>
            <person name="Houston K.A."/>
            <person name="Howland T.J."/>
            <person name="Wei M.-H."/>
            <person name="Ibegwam C."/>
            <person name="Jalali M."/>
            <person name="Kalush F."/>
            <person name="Karpen G.H."/>
            <person name="Ke Z."/>
            <person name="Kennison J.A."/>
            <person name="Ketchum K.A."/>
            <person name="Kimmel B.E."/>
            <person name="Kodira C.D."/>
            <person name="Kraft C.L."/>
            <person name="Kravitz S."/>
            <person name="Kulp D."/>
            <person name="Lai Z."/>
            <person name="Lasko P."/>
            <person name="Lei Y."/>
            <person name="Levitsky A.A."/>
            <person name="Li J.H."/>
            <person name="Li Z."/>
            <person name="Liang Y."/>
            <person name="Lin X."/>
            <person name="Liu X."/>
            <person name="Mattei B."/>
            <person name="McIntosh T.C."/>
            <person name="McLeod M.P."/>
            <person name="McPherson D."/>
            <person name="Merkulov G."/>
            <person name="Milshina N.V."/>
            <person name="Mobarry C."/>
            <person name="Morris J."/>
            <person name="Moshrefi A."/>
            <person name="Mount S.M."/>
            <person name="Moy M."/>
            <person name="Murphy B."/>
            <person name="Murphy L."/>
            <person name="Muzny D.M."/>
            <person name="Nelson D.L."/>
            <person name="Nelson D.R."/>
            <person name="Nelson K.A."/>
            <person name="Nixon K."/>
            <person name="Nusskern D.R."/>
            <person name="Pacleb J.M."/>
            <person name="Palazzolo M."/>
            <person name="Pittman G.S."/>
            <person name="Pan S."/>
            <person name="Pollard J."/>
            <person name="Puri V."/>
            <person name="Reese M.G."/>
            <person name="Reinert K."/>
            <person name="Remington K."/>
            <person name="Saunders R.D.C."/>
            <person name="Scheeler F."/>
            <person name="Shen H."/>
            <person name="Shue B.C."/>
            <person name="Siden-Kiamos I."/>
            <person name="Simpson M."/>
            <person name="Skupski M.P."/>
            <person name="Smith T.J."/>
            <person name="Spier E."/>
            <person name="Spradling A.C."/>
            <person name="Stapleton M."/>
            <person name="Strong R."/>
            <person name="Sun E."/>
            <person name="Svirskas R."/>
            <person name="Tector C."/>
            <person name="Turner R."/>
            <person name="Venter E."/>
            <person name="Wang A.H."/>
            <person name="Wang X."/>
            <person name="Wang Z.-Y."/>
            <person name="Wassarman D.A."/>
            <person name="Weinstock G.M."/>
            <person name="Weissenbach J."/>
            <person name="Williams S.M."/>
            <person name="Woodage T."/>
            <person name="Worley K.C."/>
            <person name="Wu D."/>
            <person name="Yang S."/>
            <person name="Yao Q.A."/>
            <person name="Ye J."/>
            <person name="Yeh R.-F."/>
            <person name="Zaveri J.S."/>
            <person name="Zhan M."/>
            <person name="Zhang G."/>
            <person name="Zhao Q."/>
            <person name="Zheng L."/>
            <person name="Zheng X.H."/>
            <person name="Zhong F.N."/>
            <person name="Zhong W."/>
            <person name="Zhou X."/>
            <person name="Zhu S.C."/>
            <person name="Zhu X."/>
            <person name="Smith H.O."/>
            <person name="Gibbs R.A."/>
            <person name="Myers E.W."/>
            <person name="Rubin G.M."/>
            <person name="Venter J.C."/>
        </authorList>
    </citation>
    <scope>NUCLEOTIDE SEQUENCE [LARGE SCALE GENOMIC DNA]</scope>
    <source>
        <strain evidence="6">Berkeley</strain>
    </source>
</reference>
<reference evidence="14 16" key="3">
    <citation type="journal article" date="2002" name="Genome Biol.">
        <title>Annotation of the Drosophila melanogaster euchromatic genome: a systematic review.</title>
        <authorList>
            <person name="Misra S."/>
            <person name="Crosby M.A."/>
            <person name="Mungall C.J."/>
            <person name="Matthews B.B."/>
            <person name="Campbell K.S."/>
            <person name="Hradecky P."/>
            <person name="Huang Y."/>
            <person name="Kaminker J.S."/>
            <person name="Millburn G.H."/>
            <person name="Prochnik S.E."/>
            <person name="Smith C.D."/>
            <person name="Tupy J.L."/>
            <person name="Whitfield E.J."/>
            <person name="Bayraktaroglu L."/>
            <person name="Berman B.P."/>
            <person name="Bettencourt B.R."/>
            <person name="Celniker S.E."/>
            <person name="de Grey A.D.N.J."/>
            <person name="Drysdale R.A."/>
            <person name="Harris N.L."/>
            <person name="Richter J."/>
            <person name="Russo S."/>
            <person name="Schroeder A.J."/>
            <person name="Shu S.Q."/>
            <person name="Stapleton M."/>
            <person name="Yamada C."/>
            <person name="Ashburner M."/>
            <person name="Gelbart W.M."/>
            <person name="Rubin G.M."/>
            <person name="Lewis S.E."/>
        </authorList>
    </citation>
    <scope>GENOME REANNOTATION</scope>
    <source>
        <strain>Berkeley</strain>
    </source>
</reference>
<reference evidence="14 17" key="4">
    <citation type="journal article" date="2002" name="Genome Biol.">
        <title>A Drosophila full-length cDNA resource.</title>
        <authorList>
            <person name="Stapleton M."/>
            <person name="Carlson J.W."/>
            <person name="Brokstein P."/>
            <person name="Yu C."/>
            <person name="Champe M."/>
            <person name="George R.A."/>
            <person name="Guarin H."/>
            <person name="Kronmiller B."/>
            <person name="Pacleb J.M."/>
            <person name="Park S."/>
            <person name="Wan K.H."/>
            <person name="Rubin G.M."/>
            <person name="Celniker S.E."/>
        </authorList>
    </citation>
    <scope>NUCLEOTIDE SEQUENCE [LARGE SCALE MRNA]</scope>
    <source>
        <strain evidence="17">Berkeley</strain>
        <tissue evidence="7">Embryo</tissue>
    </source>
</reference>
<reference evidence="14" key="5">
    <citation type="journal article" date="1997" name="Mol. Cell. Biol.">
        <title>A domain shared by the polycomb group proteins Scm and ph mediates heterotypic and homotypic interactions.</title>
        <authorList>
            <person name="Peterson A.J."/>
            <person name="Kyba M."/>
            <person name="Bornemann D."/>
            <person name="Morgan K."/>
            <person name="Brock H.W."/>
            <person name="Simon J.A."/>
        </authorList>
    </citation>
    <scope>INTERACTION WITH PH-P</scope>
    <scope>MUTAGENESIS OF ILE-834; GLY-836; 840-LEU-LEU-841 AND LYS-854</scope>
</reference>
<reference evidence="14" key="6">
    <citation type="journal article" date="2003" name="Nucleic Acids Res.">
        <title>The Drosophila Corto protein interacts with Polycomb-group proteins and the GAGA factor.</title>
        <authorList>
            <person name="Salvaing J."/>
            <person name="Lopez A."/>
            <person name="Boivin A."/>
            <person name="Deutsch J.S."/>
            <person name="Peronnet F."/>
        </authorList>
    </citation>
    <scope>INTERACTION WITH CORTO</scope>
</reference>
<reference evidence="14" key="7">
    <citation type="journal article" date="2004" name="Genetics">
        <title>Requirement for sex comb on midleg protein interactions in Drosophila polycomb group repression.</title>
        <authorList>
            <person name="Peterson A.J."/>
            <person name="Mallin D.R."/>
            <person name="Francis N.J."/>
            <person name="Ketel C.S."/>
            <person name="Stamm J."/>
            <person name="Voeller R.K."/>
            <person name="Kingston R.E."/>
            <person name="Simon J.A."/>
        </authorList>
    </citation>
    <scope>FUNCTION</scope>
    <scope>ASSOCIATION WITH PRC1 COMPLEX</scope>
    <scope>MUTAGENESIS OF GLU-816; GLY-836; MET-846; MET-848; MET-851 AND LYS-860</scope>
</reference>
<reference key="8">
    <citation type="journal article" date="2008" name="J. Proteome Res.">
        <title>Phosphoproteome analysis of Drosophila melanogaster embryos.</title>
        <authorList>
            <person name="Zhai B."/>
            <person name="Villen J."/>
            <person name="Beausoleil S.A."/>
            <person name="Mintseris J."/>
            <person name="Gygi S.P."/>
        </authorList>
    </citation>
    <scope>PHOSPHORYLATION [LARGE SCALE ANALYSIS] AT THR-546; SER-549; SER-550 AND SER-585</scope>
    <scope>IDENTIFICATION BY MASS SPECTROMETRY</scope>
    <source>
        <tissue>Embryo</tissue>
    </source>
</reference>
<reference evidence="14" key="9">
    <citation type="journal article" date="2005" name="J. Biol. Chem.">
        <title>Structural organization of a Sex-comb-on-midleg/polyhomeotic copolymer.</title>
        <authorList>
            <person name="Kim C.A."/>
            <person name="Sawaya M.R."/>
            <person name="Cascio D."/>
            <person name="Kim W."/>
            <person name="Bowie J.U."/>
        </authorList>
    </citation>
    <scope>X-RAY CRYSTALLOGRAPHY (1.8 ANGSTROMS) OF 795-871</scope>
    <scope>INTERACTION WITH PH-P</scope>
</reference>
<sequence>MSGGRDSSTSSGSNSAAPGASTNATSSASASASSTSTSASPGSTTSPASTQRQRGRPAKRATCTWCGEGKLPLQYVLPTQTGKKEFCSETCIAEFRKAYSKGACTQCDNVIRDGAPNKEFCSIMCMNKHQKKNCSTRHSGGSASGKGLAESERKLLASGAPAPTGPFQYESFHVFDWDAYLEETGSEAAPAKCFKQAQNPPNNDFKIGMKLEALDPRNVTSTCIATVVGVLGSRLRLRLDGSDSQNDFWRLVDSTEIHAIGHCEKNGGMLQPPLGFRMNASSWPGYLCKILNNAMVAPEEIFQPEPPEPEENLFKVGQKLEAVDKKNPQLICCATVDAIKDDQIHVTFDGWRGAFDYWCNYRSRDIFPAGWCARSCHPMQPPGHKSRMDSSSSKQRCPRPRYTVVAESEAMVPASPATAHFHPNCKGGPFINNSKLPCMVTGPTYQTLAKLCLQEVLAASTDTQQLSKLLFALEGDVHIVTAAGKNFTVKIPSPMRMKDDESLAQFIETLCTTCRACANLISLVHETEECKKCANSRKRQLTQSATPPSSPVLADKRNRQSNSATTSPSEKIIKQELAVKSPVESKSKTSTNNGKEPASQQNSNHSLNNNNNSASKSSNKVVIKSEPNGANAQTSSTTQALRKVRFQHHANTNTNSSATNGNQDTSQTTHVSTSHCSSSSTSSSTSLAGGSANTSTIGKYLAPLVAEVHPEQANVKPSNSYYKSPTTLSSSASLPTSVSTPFTGCQSASSTALAAGGVTAAKAATAPAGAAATAGASPSYTAITSPVSTPTSALANSHLRSQPIDWTIEEVIQYIESNDNSLAVHGDLFRKHEIDGKALLLLNSEMMMKYMGLKLGPALKICNLVNKVNGRRNNLAL</sequence>
<accession>Q9VHA0</accession>
<accession>Q24191</accession>